<organism>
    <name type="scientific">Pan troglodytes</name>
    <name type="common">Chimpanzee</name>
    <dbReference type="NCBI Taxonomy" id="9598"/>
    <lineage>
        <taxon>Eukaryota</taxon>
        <taxon>Metazoa</taxon>
        <taxon>Chordata</taxon>
        <taxon>Craniata</taxon>
        <taxon>Vertebrata</taxon>
        <taxon>Euteleostomi</taxon>
        <taxon>Mammalia</taxon>
        <taxon>Eutheria</taxon>
        <taxon>Euarchontoglires</taxon>
        <taxon>Primates</taxon>
        <taxon>Haplorrhini</taxon>
        <taxon>Catarrhini</taxon>
        <taxon>Hominidae</taxon>
        <taxon>Pan</taxon>
    </lineage>
</organism>
<comment type="function">
    <text evidence="2">A cytochrome P450 monooxygenase involved in the metabolism of fatty acids, steroids and retinoids. Mechanistically, uses molecular oxygen inserting one oxygen atom into a substrate, and reducing the second into a water molecule, with two electrons provided by NADPH via cytochrome P450 reductase (NADPH--hemoprotein reductase). Catalyzes the epoxidation of double bonds of polyunsaturated fatty acids (PUFA). Metabolizes endocannabinoid arachidonoylethanolamide (anandamide) to 20-hydroxyeicosatetraenoic acid ethanolamide (20-HETE-EA) and 8,9-, 11,12-, and 14,15-epoxyeicosatrienoic acid ethanolamides (EpETrE-EAs), potentially modulating endocannabinoid system signaling. Catalyzes the hydroxylation of carbon-hydrogen bonds. Metabolizes cholesterol toward 25-hydroxycholesterol, a physiological regulator of cellular cholesterol homeostasis. Catalyzes the oxidative transformations of all-trans retinol to all-trans retinal, a precursor for the active form all-trans-retinoic acid. Also involved in the oxidative metabolism of drugs such as antiarrhythmics, adrenoceptor antagonists, and tricyclic antidepressants.</text>
</comment>
<comment type="catalytic activity">
    <reaction evidence="2">
        <text>(5Z,8Z,11Z,14Z)-eicosatetraenoate + reduced [NADPH--hemoprotein reductase] + O2 = (8R,9S)-epoxy-(5Z,11Z,14Z)-eicosatrienoate + oxidized [NADPH--hemoprotein reductase] + H2O + H(+)</text>
        <dbReference type="Rhea" id="RHEA:49884"/>
        <dbReference type="Rhea" id="RHEA-COMP:11964"/>
        <dbReference type="Rhea" id="RHEA-COMP:11965"/>
        <dbReference type="ChEBI" id="CHEBI:15377"/>
        <dbReference type="ChEBI" id="CHEBI:15378"/>
        <dbReference type="ChEBI" id="CHEBI:15379"/>
        <dbReference type="ChEBI" id="CHEBI:32395"/>
        <dbReference type="ChEBI" id="CHEBI:57618"/>
        <dbReference type="ChEBI" id="CHEBI:58210"/>
        <dbReference type="ChEBI" id="CHEBI:131975"/>
    </reaction>
    <physiologicalReaction direction="left-to-right" evidence="2">
        <dbReference type="Rhea" id="RHEA:49885"/>
    </physiologicalReaction>
</comment>
<comment type="catalytic activity">
    <reaction evidence="2">
        <text>(5Z,8Z,11Z,14Z)-eicosatetraenoate + reduced [NADPH--hemoprotein reductase] + O2 = (11R,12S)-epoxy-(5Z,8Z,14Z)-eicosatrienoate + oxidized [NADPH--hemoprotein reductase] + H2O + H(+)</text>
        <dbReference type="Rhea" id="RHEA:49880"/>
        <dbReference type="Rhea" id="RHEA-COMP:11964"/>
        <dbReference type="Rhea" id="RHEA-COMP:11965"/>
        <dbReference type="ChEBI" id="CHEBI:15377"/>
        <dbReference type="ChEBI" id="CHEBI:15378"/>
        <dbReference type="ChEBI" id="CHEBI:15379"/>
        <dbReference type="ChEBI" id="CHEBI:32395"/>
        <dbReference type="ChEBI" id="CHEBI:57618"/>
        <dbReference type="ChEBI" id="CHEBI:58210"/>
        <dbReference type="ChEBI" id="CHEBI:131970"/>
    </reaction>
    <physiologicalReaction direction="left-to-right" evidence="2">
        <dbReference type="Rhea" id="RHEA:49881"/>
    </physiologicalReaction>
</comment>
<comment type="catalytic activity">
    <reaction evidence="2">
        <text>(5Z,8Z,11Z,14Z)-eicosatetraenoate + reduced [NADPH--hemoprotein reductase] + O2 = (14S,15R)-epoxy-(5Z,8Z,11Z)-eicosatrienoate + oxidized [NADPH--hemoprotein reductase] + H2O + H(+)</text>
        <dbReference type="Rhea" id="RHEA:49856"/>
        <dbReference type="Rhea" id="RHEA-COMP:11964"/>
        <dbReference type="Rhea" id="RHEA-COMP:11965"/>
        <dbReference type="ChEBI" id="CHEBI:15377"/>
        <dbReference type="ChEBI" id="CHEBI:15378"/>
        <dbReference type="ChEBI" id="CHEBI:15379"/>
        <dbReference type="ChEBI" id="CHEBI:32395"/>
        <dbReference type="ChEBI" id="CHEBI:57618"/>
        <dbReference type="ChEBI" id="CHEBI:58210"/>
        <dbReference type="ChEBI" id="CHEBI:131964"/>
    </reaction>
    <physiologicalReaction direction="left-to-right" evidence="2">
        <dbReference type="Rhea" id="RHEA:49857"/>
    </physiologicalReaction>
</comment>
<comment type="catalytic activity">
    <reaction evidence="2">
        <text>N-(5Z,8Z,11Z,14Z-eicosatetraenoyl)-ethanolamine + reduced [NADPH--hemoprotein reductase] + O2 = N-(8,9-epoxy-5Z,11Z,14Z-eicosatrienoyl)-ethanolamine + oxidized [NADPH--hemoprotein reductase] + H2O + H(+)</text>
        <dbReference type="Rhea" id="RHEA:53140"/>
        <dbReference type="Rhea" id="RHEA-COMP:11964"/>
        <dbReference type="Rhea" id="RHEA-COMP:11965"/>
        <dbReference type="ChEBI" id="CHEBI:2700"/>
        <dbReference type="ChEBI" id="CHEBI:15377"/>
        <dbReference type="ChEBI" id="CHEBI:15378"/>
        <dbReference type="ChEBI" id="CHEBI:15379"/>
        <dbReference type="ChEBI" id="CHEBI:57618"/>
        <dbReference type="ChEBI" id="CHEBI:58210"/>
        <dbReference type="ChEBI" id="CHEBI:136989"/>
    </reaction>
    <physiologicalReaction direction="left-to-right" evidence="2">
        <dbReference type="Rhea" id="RHEA:53141"/>
    </physiologicalReaction>
</comment>
<comment type="catalytic activity">
    <reaction evidence="2">
        <text>N-(5Z,8Z,11Z,14Z-eicosatetraenoyl)-ethanolamine + reduced [NADPH--hemoprotein reductase] + O2 = N-(11,12-epoxy-5Z,8Z,14Z-eicosatrienoyl)-ethanolamine + oxidized [NADPH--hemoprotein reductase] + H2O + H(+)</text>
        <dbReference type="Rhea" id="RHEA:53144"/>
        <dbReference type="Rhea" id="RHEA-COMP:11964"/>
        <dbReference type="Rhea" id="RHEA-COMP:11965"/>
        <dbReference type="ChEBI" id="CHEBI:2700"/>
        <dbReference type="ChEBI" id="CHEBI:15377"/>
        <dbReference type="ChEBI" id="CHEBI:15378"/>
        <dbReference type="ChEBI" id="CHEBI:15379"/>
        <dbReference type="ChEBI" id="CHEBI:57618"/>
        <dbReference type="ChEBI" id="CHEBI:58210"/>
        <dbReference type="ChEBI" id="CHEBI:136990"/>
    </reaction>
    <physiologicalReaction direction="left-to-right" evidence="2">
        <dbReference type="Rhea" id="RHEA:53145"/>
    </physiologicalReaction>
</comment>
<comment type="catalytic activity">
    <reaction evidence="2">
        <text>N-(5Z,8Z,11Z,14Z-eicosatetraenoyl)-ethanolamine + reduced [NADPH--hemoprotein reductase] + O2 = N-(14,15-epoxy-5Z,8Z,11Z-eicosatrienoyl)-ethanolamine + oxidized [NADPH--hemoprotein reductase] + H2O + H(+)</text>
        <dbReference type="Rhea" id="RHEA:53148"/>
        <dbReference type="Rhea" id="RHEA-COMP:11964"/>
        <dbReference type="Rhea" id="RHEA-COMP:11965"/>
        <dbReference type="ChEBI" id="CHEBI:2700"/>
        <dbReference type="ChEBI" id="CHEBI:15377"/>
        <dbReference type="ChEBI" id="CHEBI:15378"/>
        <dbReference type="ChEBI" id="CHEBI:15379"/>
        <dbReference type="ChEBI" id="CHEBI:57618"/>
        <dbReference type="ChEBI" id="CHEBI:58210"/>
        <dbReference type="ChEBI" id="CHEBI:136991"/>
    </reaction>
    <physiologicalReaction direction="left-to-right" evidence="2">
        <dbReference type="Rhea" id="RHEA:53149"/>
    </physiologicalReaction>
</comment>
<comment type="catalytic activity">
    <reaction evidence="2">
        <text>N-(5Z,8Z,11Z,14Z-eicosatetraenoyl)-ethanolamine + reduced [NADPH--hemoprotein reductase] + O2 = N-(20-hydroxy-5Z,8Z,11Z,14Z-eicosatetraenoyl)-ethanolamine + oxidized [NADPH--hemoprotein reductase] + H2O + H(+)</text>
        <dbReference type="Rhea" id="RHEA:53152"/>
        <dbReference type="Rhea" id="RHEA-COMP:11964"/>
        <dbReference type="Rhea" id="RHEA-COMP:11965"/>
        <dbReference type="ChEBI" id="CHEBI:2700"/>
        <dbReference type="ChEBI" id="CHEBI:15377"/>
        <dbReference type="ChEBI" id="CHEBI:15378"/>
        <dbReference type="ChEBI" id="CHEBI:15379"/>
        <dbReference type="ChEBI" id="CHEBI:57618"/>
        <dbReference type="ChEBI" id="CHEBI:58210"/>
        <dbReference type="ChEBI" id="CHEBI:136992"/>
    </reaction>
    <physiologicalReaction direction="left-to-right" evidence="2">
        <dbReference type="Rhea" id="RHEA:53153"/>
    </physiologicalReaction>
</comment>
<comment type="catalytic activity">
    <reaction evidence="2">
        <text>(5Z,8Z,11Z,14Z,17Z)-eicosapentaenoate + reduced [NADPH--hemoprotein reductase] + O2 = (17S,18R)-epoxy-(5Z,8Z,11Z,14Z)-eicosatetraenoate + oxidized [NADPH--hemoprotein reductase] + H2O + H(+)</text>
        <dbReference type="Rhea" id="RHEA:39783"/>
        <dbReference type="Rhea" id="RHEA-COMP:11964"/>
        <dbReference type="Rhea" id="RHEA-COMP:11965"/>
        <dbReference type="ChEBI" id="CHEBI:15377"/>
        <dbReference type="ChEBI" id="CHEBI:15378"/>
        <dbReference type="ChEBI" id="CHEBI:15379"/>
        <dbReference type="ChEBI" id="CHEBI:57618"/>
        <dbReference type="ChEBI" id="CHEBI:58210"/>
        <dbReference type="ChEBI" id="CHEBI:58562"/>
        <dbReference type="ChEBI" id="CHEBI:76635"/>
    </reaction>
    <physiologicalReaction direction="left-to-right" evidence="2">
        <dbReference type="Rhea" id="RHEA:39784"/>
    </physiologicalReaction>
</comment>
<comment type="catalytic activity">
    <reaction evidence="2">
        <text>(4Z,7Z,10Z,13Z,16Z,19Z)-docosahexaenoate + reduced [NADPH--hemoprotein reductase] + O2 = (19R,20S)-epoxy-(4Z,7Z,10Z,13Z,16Z)-docosapentaenoate + oxidized [NADPH--hemoprotein reductase] + H2O + H(+)</text>
        <dbReference type="Rhea" id="RHEA:52120"/>
        <dbReference type="Rhea" id="RHEA-COMP:11964"/>
        <dbReference type="Rhea" id="RHEA-COMP:11965"/>
        <dbReference type="ChEBI" id="CHEBI:15377"/>
        <dbReference type="ChEBI" id="CHEBI:15378"/>
        <dbReference type="ChEBI" id="CHEBI:15379"/>
        <dbReference type="ChEBI" id="CHEBI:57618"/>
        <dbReference type="ChEBI" id="CHEBI:58210"/>
        <dbReference type="ChEBI" id="CHEBI:77016"/>
        <dbReference type="ChEBI" id="CHEBI:136410"/>
    </reaction>
    <physiologicalReaction direction="left-to-right" evidence="2">
        <dbReference type="Rhea" id="RHEA:52121"/>
    </physiologicalReaction>
</comment>
<comment type="catalytic activity">
    <reaction evidence="2">
        <text>(4Z,7Z,10Z,13Z,16Z,19Z)-docosahexaenoate + reduced [NADPH--hemoprotein reductase] + O2 = (19S,20R)-epoxy-(4Z,7Z,10Z,13Z,16Z)-docosapentaenoate + oxidized [NADPH--hemoprotein reductase] + H2O + H(+)</text>
        <dbReference type="Rhea" id="RHEA:52124"/>
        <dbReference type="Rhea" id="RHEA-COMP:11964"/>
        <dbReference type="Rhea" id="RHEA-COMP:11965"/>
        <dbReference type="ChEBI" id="CHEBI:15377"/>
        <dbReference type="ChEBI" id="CHEBI:15378"/>
        <dbReference type="ChEBI" id="CHEBI:15379"/>
        <dbReference type="ChEBI" id="CHEBI:57618"/>
        <dbReference type="ChEBI" id="CHEBI:58210"/>
        <dbReference type="ChEBI" id="CHEBI:77016"/>
        <dbReference type="ChEBI" id="CHEBI:136411"/>
    </reaction>
    <physiologicalReaction direction="left-to-right" evidence="2">
        <dbReference type="Rhea" id="RHEA:52125"/>
    </physiologicalReaction>
</comment>
<comment type="catalytic activity">
    <reaction evidence="2">
        <text>cholesterol + reduced [NADPH--hemoprotein reductase] + O2 = 25-hydroxycholesterol + oxidized [NADPH--hemoprotein reductase] + H2O + H(+)</text>
        <dbReference type="Rhea" id="RHEA:50256"/>
        <dbReference type="Rhea" id="RHEA-COMP:11964"/>
        <dbReference type="Rhea" id="RHEA-COMP:11965"/>
        <dbReference type="ChEBI" id="CHEBI:15377"/>
        <dbReference type="ChEBI" id="CHEBI:15378"/>
        <dbReference type="ChEBI" id="CHEBI:15379"/>
        <dbReference type="ChEBI" id="CHEBI:16113"/>
        <dbReference type="ChEBI" id="CHEBI:42977"/>
        <dbReference type="ChEBI" id="CHEBI:57618"/>
        <dbReference type="ChEBI" id="CHEBI:58210"/>
    </reaction>
    <physiologicalReaction direction="left-to-right" evidence="2">
        <dbReference type="Rhea" id="RHEA:50257"/>
    </physiologicalReaction>
</comment>
<comment type="catalytic activity">
    <reaction evidence="2">
        <text>all-trans-retinol + reduced [NADPH--hemoprotein reductase] + O2 = all-trans-retinal + oxidized [NADPH--hemoprotein reductase] + 2 H2O + H(+)</text>
        <dbReference type="Rhea" id="RHEA:42092"/>
        <dbReference type="Rhea" id="RHEA-COMP:11964"/>
        <dbReference type="Rhea" id="RHEA-COMP:11965"/>
        <dbReference type="ChEBI" id="CHEBI:15377"/>
        <dbReference type="ChEBI" id="CHEBI:15378"/>
        <dbReference type="ChEBI" id="CHEBI:15379"/>
        <dbReference type="ChEBI" id="CHEBI:17336"/>
        <dbReference type="ChEBI" id="CHEBI:17898"/>
        <dbReference type="ChEBI" id="CHEBI:57618"/>
        <dbReference type="ChEBI" id="CHEBI:58210"/>
    </reaction>
    <physiologicalReaction direction="left-to-right" evidence="2">
        <dbReference type="Rhea" id="RHEA:42093"/>
    </physiologicalReaction>
</comment>
<comment type="cofactor">
    <cofactor evidence="1">
        <name>heme</name>
        <dbReference type="ChEBI" id="CHEBI:30413"/>
    </cofactor>
</comment>
<comment type="pathway">
    <text evidence="2">Cofactor metabolism; retinol metabolism.</text>
</comment>
<comment type="pathway">
    <text evidence="2">Lipid metabolism; fatty acid metabolism.</text>
</comment>
<comment type="pathway">
    <text evidence="2">Steroid metabolism; cholesterol metabolism.</text>
</comment>
<comment type="subcellular location">
    <subcellularLocation>
        <location evidence="2">Endoplasmic reticulum membrane</location>
        <topology evidence="2">Peripheral membrane protein</topology>
    </subcellularLocation>
    <subcellularLocation>
        <location evidence="2">Microsome membrane</location>
        <topology evidence="2">Peripheral membrane protein</topology>
    </subcellularLocation>
</comment>
<comment type="similarity">
    <text evidence="3">Belongs to the cytochrome P450 family.</text>
</comment>
<accession>Q2XNC8</accession>
<sequence length="497" mass="55862">MGLEALVPLAVIVTIFLLLVDLMHRRQRWAARYPPGPLPLPGLGNLLHVDFQNTPYCFDQLRRRFGDVFSLQLAWTPVVVLNGLAAVREALVTHGEDTADRPPVPITQILGFGPRSQGVFLARYGPAWREQRRFSVSTLRNLGLGKKSLEQWVTEEAACLCAAFANHSGRPFRPNGLLDKAVSNVIASLTCGRRFEYDDPRFLRLLDLAQEGLKEESGFLREVLNAIPVLLHIPALAGKVLRFQKAFLTQLDELLTEHRMTWDPAQPPRDLTEAFLAEMEKAKGNPESSFNDENLRIVVADLFSAGIVTTSTTLAWGLLLMILHPDVQRRVQQEIDDVIGQVRRPEMGDQARMPYTTAVIHEVQRFGDIVPLGVTHMTSRDIEVQGFRIPKGTTLFTNLSSVLKDKAVWEKPFRFHPEHFLDAQGHFVKPEAFLPFSAGRRACLGEPLARMELFLFFTSLLQHFSFSVPTGQPRPSHHGVFAFLVTPSPYELCAVPR</sequence>
<reference key="1">
    <citation type="submission" date="2005-11" db="EMBL/GenBank/DDBJ databases">
        <title>CYP2D6 evolution and allele diversity among human races.</title>
        <authorList>
            <person name="Koch W.H."/>
            <person name="Nikoloff D.M."/>
            <person name="Lu W."/>
            <person name="Pan R.M."/>
            <person name="deLeon J."/>
            <person name="Wedlund P.J."/>
        </authorList>
    </citation>
    <scope>NUCLEOTIDE SEQUENCE [GENOMIC DNA]</scope>
</reference>
<gene>
    <name type="primary">CYP2D6</name>
</gene>
<proteinExistence type="inferred from homology"/>
<keyword id="KW-0153">Cholesterol metabolism</keyword>
<keyword id="KW-0256">Endoplasmic reticulum</keyword>
<keyword id="KW-0276">Fatty acid metabolism</keyword>
<keyword id="KW-0349">Heme</keyword>
<keyword id="KW-0408">Iron</keyword>
<keyword id="KW-0443">Lipid metabolism</keyword>
<keyword id="KW-0472">Membrane</keyword>
<keyword id="KW-0479">Metal-binding</keyword>
<keyword id="KW-0492">Microsome</keyword>
<keyword id="KW-0503">Monooxygenase</keyword>
<keyword id="KW-0560">Oxidoreductase</keyword>
<keyword id="KW-1185">Reference proteome</keyword>
<keyword id="KW-0753">Steroid metabolism</keyword>
<keyword id="KW-1207">Sterol metabolism</keyword>
<name>CP2D6_PANTR</name>
<feature type="chain" id="PRO_0000051733" description="Cytochrome P450 2D6">
    <location>
        <begin position="1"/>
        <end position="497"/>
    </location>
</feature>
<feature type="binding site" evidence="1">
    <location>
        <position position="301"/>
    </location>
    <ligand>
        <name>substrate</name>
    </ligand>
</feature>
<feature type="binding site" description="axial binding residue" evidence="1">
    <location>
        <position position="443"/>
    </location>
    <ligand>
        <name>heme</name>
        <dbReference type="ChEBI" id="CHEBI:30413"/>
    </ligand>
    <ligandPart>
        <name>Fe</name>
        <dbReference type="ChEBI" id="CHEBI:18248"/>
    </ligandPart>
</feature>
<protein>
    <recommendedName>
        <fullName>Cytochrome P450 2D6</fullName>
        <ecNumber evidence="2">1.14.14.-</ecNumber>
    </recommendedName>
    <alternativeName>
        <fullName>CYPIID6</fullName>
    </alternativeName>
    <alternativeName>
        <fullName evidence="2">Cholesterol 25-hydroxylase</fullName>
    </alternativeName>
    <alternativeName>
        <fullName>Cytochrome P450-DB1</fullName>
    </alternativeName>
    <alternativeName>
        <fullName>Debrisoquine 4-hydroxylase</fullName>
    </alternativeName>
</protein>
<evidence type="ECO:0000250" key="1"/>
<evidence type="ECO:0000250" key="2">
    <source>
        <dbReference type="UniProtKB" id="P10635"/>
    </source>
</evidence>
<evidence type="ECO:0000305" key="3"/>
<dbReference type="EC" id="1.14.14.-" evidence="2"/>
<dbReference type="EMBL" id="DQ282164">
    <property type="protein sequence ID" value="ABB77911.1"/>
    <property type="molecule type" value="Genomic_DNA"/>
</dbReference>
<dbReference type="RefSeq" id="NP_001035712.1">
    <property type="nucleotide sequence ID" value="NM_001040622.1"/>
</dbReference>
<dbReference type="BMRB" id="Q2XNC8"/>
<dbReference type="SMR" id="Q2XNC8"/>
<dbReference type="FunCoup" id="Q2XNC8">
    <property type="interactions" value="404"/>
</dbReference>
<dbReference type="STRING" id="9598.ENSPTRP00000042793"/>
<dbReference type="PaxDb" id="9598-ENSPTRP00000024888"/>
<dbReference type="GeneID" id="470228"/>
<dbReference type="KEGG" id="ptr:470228"/>
<dbReference type="CTD" id="1565"/>
<dbReference type="eggNOG" id="KOG0156">
    <property type="taxonomic scope" value="Eukaryota"/>
</dbReference>
<dbReference type="InParanoid" id="Q2XNC8"/>
<dbReference type="OrthoDB" id="6991at9604"/>
<dbReference type="UniPathway" id="UPA00199"/>
<dbReference type="UniPathway" id="UPA00296"/>
<dbReference type="UniPathway" id="UPA00912"/>
<dbReference type="Proteomes" id="UP000002277">
    <property type="component" value="Unplaced"/>
</dbReference>
<dbReference type="GO" id="GO:0005737">
    <property type="term" value="C:cytoplasm"/>
    <property type="evidence" value="ECO:0000318"/>
    <property type="project" value="GO_Central"/>
</dbReference>
<dbReference type="GO" id="GO:0005789">
    <property type="term" value="C:endoplasmic reticulum membrane"/>
    <property type="evidence" value="ECO:0007669"/>
    <property type="project" value="UniProtKB-SubCell"/>
</dbReference>
<dbReference type="GO" id="GO:0043231">
    <property type="term" value="C:intracellular membrane-bounded organelle"/>
    <property type="evidence" value="ECO:0000318"/>
    <property type="project" value="GO_Central"/>
</dbReference>
<dbReference type="GO" id="GO:0062188">
    <property type="term" value="F:anandamide 11,12 epoxidase activity"/>
    <property type="evidence" value="ECO:0007669"/>
    <property type="project" value="RHEA"/>
</dbReference>
<dbReference type="GO" id="GO:0062189">
    <property type="term" value="F:anandamide 14,15 epoxidase activity"/>
    <property type="evidence" value="ECO:0007669"/>
    <property type="project" value="RHEA"/>
</dbReference>
<dbReference type="GO" id="GO:0062187">
    <property type="term" value="F:anandamide 8,9 epoxidase activity"/>
    <property type="evidence" value="ECO:0007669"/>
    <property type="project" value="RHEA"/>
</dbReference>
<dbReference type="GO" id="GO:0020037">
    <property type="term" value="F:heme binding"/>
    <property type="evidence" value="ECO:0000250"/>
    <property type="project" value="UniProtKB"/>
</dbReference>
<dbReference type="GO" id="GO:0005506">
    <property type="term" value="F:iron ion binding"/>
    <property type="evidence" value="ECO:0007669"/>
    <property type="project" value="InterPro"/>
</dbReference>
<dbReference type="GO" id="GO:0016712">
    <property type="term" value="F:oxidoreductase activity, acting on paired donors, with incorporation or reduction of molecular oxygen, reduced flavin or flavoprotein as one donor, and incorporation of one atom of oxygen"/>
    <property type="evidence" value="ECO:0000318"/>
    <property type="project" value="GO_Central"/>
</dbReference>
<dbReference type="GO" id="GO:0019369">
    <property type="term" value="P:arachidonate metabolic process"/>
    <property type="evidence" value="ECO:0000318"/>
    <property type="project" value="GO_Central"/>
</dbReference>
<dbReference type="GO" id="GO:0008203">
    <property type="term" value="P:cholesterol metabolic process"/>
    <property type="evidence" value="ECO:0007669"/>
    <property type="project" value="UniProtKB-UniPathway"/>
</dbReference>
<dbReference type="GO" id="GO:0042572">
    <property type="term" value="P:retinol metabolic process"/>
    <property type="evidence" value="ECO:0007669"/>
    <property type="project" value="UniProtKB-UniPathway"/>
</dbReference>
<dbReference type="GO" id="GO:0006805">
    <property type="term" value="P:xenobiotic metabolic process"/>
    <property type="evidence" value="ECO:0000318"/>
    <property type="project" value="GO_Central"/>
</dbReference>
<dbReference type="CDD" id="cd20663">
    <property type="entry name" value="CYP2D"/>
    <property type="match status" value="1"/>
</dbReference>
<dbReference type="FunFam" id="1.10.630.10:FF:000004">
    <property type="entry name" value="cytochrome P450 2D15 isoform X1"/>
    <property type="match status" value="1"/>
</dbReference>
<dbReference type="Gene3D" id="1.10.630.10">
    <property type="entry name" value="Cytochrome P450"/>
    <property type="match status" value="1"/>
</dbReference>
<dbReference type="InterPro" id="IPR001128">
    <property type="entry name" value="Cyt_P450"/>
</dbReference>
<dbReference type="InterPro" id="IPR017972">
    <property type="entry name" value="Cyt_P450_CS"/>
</dbReference>
<dbReference type="InterPro" id="IPR002401">
    <property type="entry name" value="Cyt_P450_E_grp-I"/>
</dbReference>
<dbReference type="InterPro" id="IPR008069">
    <property type="entry name" value="Cyt_P450_E_grp-I_CYP2D-like"/>
</dbReference>
<dbReference type="InterPro" id="IPR036396">
    <property type="entry name" value="Cyt_P450_sf"/>
</dbReference>
<dbReference type="InterPro" id="IPR050182">
    <property type="entry name" value="Cytochrome_P450_fam2"/>
</dbReference>
<dbReference type="PANTHER" id="PTHR24300:SF1">
    <property type="entry name" value="CYTOCHROME P450 2D6-RELATED"/>
    <property type="match status" value="1"/>
</dbReference>
<dbReference type="PANTHER" id="PTHR24300">
    <property type="entry name" value="CYTOCHROME P450 508A4-RELATED"/>
    <property type="match status" value="1"/>
</dbReference>
<dbReference type="Pfam" id="PF00067">
    <property type="entry name" value="p450"/>
    <property type="match status" value="1"/>
</dbReference>
<dbReference type="PRINTS" id="PR00463">
    <property type="entry name" value="EP450I"/>
</dbReference>
<dbReference type="PRINTS" id="PR01686">
    <property type="entry name" value="EP450ICYP2D"/>
</dbReference>
<dbReference type="PRINTS" id="PR00385">
    <property type="entry name" value="P450"/>
</dbReference>
<dbReference type="SUPFAM" id="SSF48264">
    <property type="entry name" value="Cytochrome P450"/>
    <property type="match status" value="1"/>
</dbReference>
<dbReference type="PROSITE" id="PS00086">
    <property type="entry name" value="CYTOCHROME_P450"/>
    <property type="match status" value="1"/>
</dbReference>